<gene>
    <name type="primary">PDCL3</name>
    <name type="synonym">PhLP2A</name>
    <name type="synonym">VIAF1</name>
</gene>
<keyword id="KW-0002">3D-structure</keyword>
<keyword id="KW-0007">Acetylation</keyword>
<keyword id="KW-0037">Angiogenesis</keyword>
<keyword id="KW-0053">Apoptosis</keyword>
<keyword id="KW-0143">Chaperone</keyword>
<keyword id="KW-0963">Cytoplasm</keyword>
<keyword id="KW-0256">Endoplasmic reticulum</keyword>
<keyword id="KW-0597">Phosphoprotein</keyword>
<keyword id="KW-1267">Proteomics identification</keyword>
<keyword id="KW-1185">Reference proteome</keyword>
<name>PDCL3_HUMAN</name>
<dbReference type="EMBL" id="AF110511">
    <property type="protein sequence ID" value="AAG21887.1"/>
    <property type="molecule type" value="mRNA"/>
</dbReference>
<dbReference type="EMBL" id="AF267853">
    <property type="protein sequence ID" value="AAG44722.1"/>
    <property type="molecule type" value="mRNA"/>
</dbReference>
<dbReference type="EMBL" id="AK313985">
    <property type="protein sequence ID" value="BAG36697.1"/>
    <property type="molecule type" value="mRNA"/>
</dbReference>
<dbReference type="EMBL" id="AC068538">
    <property type="protein sequence ID" value="AAX93227.1"/>
    <property type="molecule type" value="Genomic_DNA"/>
</dbReference>
<dbReference type="EMBL" id="CH471127">
    <property type="protein sequence ID" value="EAX01838.1"/>
    <property type="molecule type" value="Genomic_DNA"/>
</dbReference>
<dbReference type="EMBL" id="BC001021">
    <property type="protein sequence ID" value="AAH01021.1"/>
    <property type="molecule type" value="mRNA"/>
</dbReference>
<dbReference type="CCDS" id="CCDS33261.1"/>
<dbReference type="RefSeq" id="NP_076970.1">
    <property type="nucleotide sequence ID" value="NM_024065.5"/>
</dbReference>
<dbReference type="PDB" id="7NVM">
    <property type="method" value="EM"/>
    <property type="resolution" value="3.10 A"/>
    <property type="chains" value="P=1-239"/>
</dbReference>
<dbReference type="PDB" id="8I1U">
    <property type="method" value="EM"/>
    <property type="resolution" value="3.24 A"/>
    <property type="chains" value="Q/R=1-239"/>
</dbReference>
<dbReference type="PDB" id="8I6J">
    <property type="method" value="EM"/>
    <property type="resolution" value="3.82 A"/>
    <property type="chains" value="Q=1-239"/>
</dbReference>
<dbReference type="PDB" id="8I9Q">
    <property type="method" value="EM"/>
    <property type="resolution" value="4.22 A"/>
    <property type="chains" value="Q=1-239"/>
</dbReference>
<dbReference type="PDB" id="8I9U">
    <property type="method" value="EM"/>
    <property type="resolution" value="3.10 A"/>
    <property type="chains" value="Q/R=1-239"/>
</dbReference>
<dbReference type="PDB" id="8IB8">
    <property type="method" value="EM"/>
    <property type="resolution" value="4.42 A"/>
    <property type="chains" value="Q=1-239"/>
</dbReference>
<dbReference type="PDBsum" id="7NVM"/>
<dbReference type="PDBsum" id="8I1U"/>
<dbReference type="PDBsum" id="8I6J"/>
<dbReference type="PDBsum" id="8I9Q"/>
<dbReference type="PDBsum" id="8I9U"/>
<dbReference type="PDBsum" id="8IB8"/>
<dbReference type="BMRB" id="Q9H2J4"/>
<dbReference type="EMDB" id="EMD-12606"/>
<dbReference type="EMDB" id="EMD-35122"/>
<dbReference type="EMDB" id="EMD-35199"/>
<dbReference type="EMDB" id="EMD-35280"/>
<dbReference type="EMDB" id="EMD-35284"/>
<dbReference type="EMDB" id="EMD-35335"/>
<dbReference type="SMR" id="Q9H2J4"/>
<dbReference type="BioGRID" id="122497">
    <property type="interactions" value="124"/>
</dbReference>
<dbReference type="FunCoup" id="Q9H2J4">
    <property type="interactions" value="3408"/>
</dbReference>
<dbReference type="IntAct" id="Q9H2J4">
    <property type="interactions" value="78"/>
</dbReference>
<dbReference type="MINT" id="Q9H2J4"/>
<dbReference type="STRING" id="9606.ENSP00000264254"/>
<dbReference type="BindingDB" id="Q9H2J4"/>
<dbReference type="GlyGen" id="Q9H2J4">
    <property type="glycosylation" value="1 site, 1 O-linked glycan (1 site)"/>
</dbReference>
<dbReference type="iPTMnet" id="Q9H2J4"/>
<dbReference type="MetOSite" id="Q9H2J4"/>
<dbReference type="PhosphoSitePlus" id="Q9H2J4"/>
<dbReference type="BioMuta" id="PDCL3"/>
<dbReference type="DMDM" id="50401164"/>
<dbReference type="jPOST" id="Q9H2J4"/>
<dbReference type="MassIVE" id="Q9H2J4"/>
<dbReference type="PaxDb" id="9606-ENSP00000264254"/>
<dbReference type="PeptideAtlas" id="Q9H2J4"/>
<dbReference type="ProteomicsDB" id="80555"/>
<dbReference type="Pumba" id="Q9H2J4"/>
<dbReference type="TopDownProteomics" id="Q9H2J4"/>
<dbReference type="Antibodypedia" id="17722">
    <property type="antibodies" value="188 antibodies from 26 providers"/>
</dbReference>
<dbReference type="DNASU" id="79031"/>
<dbReference type="Ensembl" id="ENST00000264254.11">
    <property type="protein sequence ID" value="ENSP00000264254.6"/>
    <property type="gene ID" value="ENSG00000115539.15"/>
</dbReference>
<dbReference type="Ensembl" id="ENST00000718278.1">
    <property type="protein sequence ID" value="ENSP00000520716.1"/>
    <property type="gene ID" value="ENSG00000115539.15"/>
</dbReference>
<dbReference type="GeneID" id="79031"/>
<dbReference type="KEGG" id="hsa:79031"/>
<dbReference type="MANE-Select" id="ENST00000264254.11">
    <property type="protein sequence ID" value="ENSP00000264254.6"/>
    <property type="RefSeq nucleotide sequence ID" value="NM_024065.5"/>
    <property type="RefSeq protein sequence ID" value="NP_076970.1"/>
</dbReference>
<dbReference type="UCSC" id="uc002tao.3">
    <property type="organism name" value="human"/>
</dbReference>
<dbReference type="AGR" id="HGNC:28860"/>
<dbReference type="CTD" id="79031"/>
<dbReference type="DisGeNET" id="79031"/>
<dbReference type="GeneCards" id="PDCL3"/>
<dbReference type="HGNC" id="HGNC:28860">
    <property type="gene designation" value="PDCL3"/>
</dbReference>
<dbReference type="HPA" id="ENSG00000115539">
    <property type="expression patterns" value="Low tissue specificity"/>
</dbReference>
<dbReference type="MIM" id="611678">
    <property type="type" value="gene"/>
</dbReference>
<dbReference type="neXtProt" id="NX_Q9H2J4"/>
<dbReference type="OpenTargets" id="ENSG00000115539"/>
<dbReference type="PharmGKB" id="PA134979849"/>
<dbReference type="VEuPathDB" id="HostDB:ENSG00000115539"/>
<dbReference type="eggNOG" id="KOG3170">
    <property type="taxonomic scope" value="Eukaryota"/>
</dbReference>
<dbReference type="GeneTree" id="ENSGT00940000154295"/>
<dbReference type="HOGENOM" id="CLU_072604_0_0_1"/>
<dbReference type="InParanoid" id="Q9H2J4"/>
<dbReference type="OMA" id="FCEIRAN"/>
<dbReference type="OrthoDB" id="45518at2759"/>
<dbReference type="PAN-GO" id="Q9H2J4">
    <property type="GO annotations" value="6 GO annotations based on evolutionary models"/>
</dbReference>
<dbReference type="PhylomeDB" id="Q9H2J4"/>
<dbReference type="TreeFam" id="TF315179"/>
<dbReference type="PathwayCommons" id="Q9H2J4"/>
<dbReference type="SignaLink" id="Q9H2J4"/>
<dbReference type="BioGRID-ORCS" id="79031">
    <property type="hits" value="118 hits in 1151 CRISPR screens"/>
</dbReference>
<dbReference type="ChiTaRS" id="PDCL3">
    <property type="organism name" value="human"/>
</dbReference>
<dbReference type="GenomeRNAi" id="79031"/>
<dbReference type="Pharos" id="Q9H2J4">
    <property type="development level" value="Tbio"/>
</dbReference>
<dbReference type="PRO" id="PR:Q9H2J4"/>
<dbReference type="Proteomes" id="UP000005640">
    <property type="component" value="Chromosome 2"/>
</dbReference>
<dbReference type="RNAct" id="Q9H2J4">
    <property type="molecule type" value="protein"/>
</dbReference>
<dbReference type="Bgee" id="ENSG00000115539">
    <property type="expression patterns" value="Expressed in gastrocnemius and 104 other cell types or tissues"/>
</dbReference>
<dbReference type="ExpressionAtlas" id="Q9H2J4">
    <property type="expression patterns" value="baseline and differential"/>
</dbReference>
<dbReference type="GO" id="GO:0005737">
    <property type="term" value="C:cytoplasm"/>
    <property type="evidence" value="ECO:0000314"/>
    <property type="project" value="UniProtKB"/>
</dbReference>
<dbReference type="GO" id="GO:0005829">
    <property type="term" value="C:cytosol"/>
    <property type="evidence" value="ECO:0000314"/>
    <property type="project" value="HPA"/>
</dbReference>
<dbReference type="GO" id="GO:0005783">
    <property type="term" value="C:endoplasmic reticulum"/>
    <property type="evidence" value="ECO:0000314"/>
    <property type="project" value="UniProtKB"/>
</dbReference>
<dbReference type="GO" id="GO:0005654">
    <property type="term" value="C:nucleoplasm"/>
    <property type="evidence" value="ECO:0000314"/>
    <property type="project" value="HPA"/>
</dbReference>
<dbReference type="GO" id="GO:0048471">
    <property type="term" value="C:perinuclear region of cytoplasm"/>
    <property type="evidence" value="ECO:0007669"/>
    <property type="project" value="UniProtKB-SubCell"/>
</dbReference>
<dbReference type="GO" id="GO:0097356">
    <property type="term" value="C:perinucleolar compartment"/>
    <property type="evidence" value="ECO:0000314"/>
    <property type="project" value="UniProtKB"/>
</dbReference>
<dbReference type="GO" id="GO:0032991">
    <property type="term" value="C:protein-containing complex"/>
    <property type="evidence" value="ECO:0007669"/>
    <property type="project" value="Ensembl"/>
</dbReference>
<dbReference type="GO" id="GO:0044183">
    <property type="term" value="F:protein folding chaperone"/>
    <property type="evidence" value="ECO:0000315"/>
    <property type="project" value="UniProtKB"/>
</dbReference>
<dbReference type="GO" id="GO:0043184">
    <property type="term" value="F:vascular endothelial growth factor receptor 2 binding"/>
    <property type="evidence" value="ECO:0000318"/>
    <property type="project" value="GO_Central"/>
</dbReference>
<dbReference type="GO" id="GO:0030036">
    <property type="term" value="P:actin cytoskeleton organization"/>
    <property type="evidence" value="ECO:0000315"/>
    <property type="project" value="UniProtKB"/>
</dbReference>
<dbReference type="GO" id="GO:0001525">
    <property type="term" value="P:angiogenesis"/>
    <property type="evidence" value="ECO:0000315"/>
    <property type="project" value="UniProtKB"/>
</dbReference>
<dbReference type="GO" id="GO:0006915">
    <property type="term" value="P:apoptotic process"/>
    <property type="evidence" value="ECO:0007669"/>
    <property type="project" value="UniProtKB-KW"/>
</dbReference>
<dbReference type="GO" id="GO:0061077">
    <property type="term" value="P:chaperone-mediated protein folding"/>
    <property type="evidence" value="ECO:0000315"/>
    <property type="project" value="UniProtKB"/>
</dbReference>
<dbReference type="GO" id="GO:1903645">
    <property type="term" value="P:negative regulation of chaperone-mediated protein folding"/>
    <property type="evidence" value="ECO:0000315"/>
    <property type="project" value="UniProtKB"/>
</dbReference>
<dbReference type="GO" id="GO:2000059">
    <property type="term" value="P:negative regulation of ubiquitin-dependent protein catabolic process"/>
    <property type="evidence" value="ECO:0000315"/>
    <property type="project" value="MGI"/>
</dbReference>
<dbReference type="GO" id="GO:0045766">
    <property type="term" value="P:positive regulation of angiogenesis"/>
    <property type="evidence" value="ECO:0000315"/>
    <property type="project" value="MGI"/>
</dbReference>
<dbReference type="GO" id="GO:0001938">
    <property type="term" value="P:positive regulation of endothelial cell proliferation"/>
    <property type="evidence" value="ECO:0000315"/>
    <property type="project" value="MGI"/>
</dbReference>
<dbReference type="GO" id="GO:0010628">
    <property type="term" value="P:positive regulation of gene expression"/>
    <property type="evidence" value="ECO:0000315"/>
    <property type="project" value="UniProtKB"/>
</dbReference>
<dbReference type="GO" id="GO:0006457">
    <property type="term" value="P:protein folding"/>
    <property type="evidence" value="ECO:0000318"/>
    <property type="project" value="GO_Central"/>
</dbReference>
<dbReference type="GO" id="GO:0050821">
    <property type="term" value="P:protein stabilization"/>
    <property type="evidence" value="ECO:0000315"/>
    <property type="project" value="UniProtKB"/>
</dbReference>
<dbReference type="GO" id="GO:0050730">
    <property type="term" value="P:regulation of peptidyl-tyrosine phosphorylation"/>
    <property type="evidence" value="ECO:0000315"/>
    <property type="project" value="MGI"/>
</dbReference>
<dbReference type="CDD" id="cd02988">
    <property type="entry name" value="Phd_like_VIAF"/>
    <property type="match status" value="1"/>
</dbReference>
<dbReference type="FunFam" id="3.40.30.10:FF:000081">
    <property type="entry name" value="phosducin-like protein 3"/>
    <property type="match status" value="1"/>
</dbReference>
<dbReference type="Gene3D" id="3.40.30.10">
    <property type="entry name" value="Glutaredoxin"/>
    <property type="match status" value="1"/>
</dbReference>
<dbReference type="InterPro" id="IPR051498">
    <property type="entry name" value="Phosducin-like_chap/apop_reg"/>
</dbReference>
<dbReference type="InterPro" id="IPR024253">
    <property type="entry name" value="Phosducin_thioredoxin-like_dom"/>
</dbReference>
<dbReference type="InterPro" id="IPR036249">
    <property type="entry name" value="Thioredoxin-like_sf"/>
</dbReference>
<dbReference type="NCBIfam" id="TIGR01552">
    <property type="entry name" value="phd_fam"/>
    <property type="match status" value="1"/>
</dbReference>
<dbReference type="PANTHER" id="PTHR45809:SF4">
    <property type="entry name" value="PHOSDUCIN-LIKE PROTEIN 3"/>
    <property type="match status" value="1"/>
</dbReference>
<dbReference type="PANTHER" id="PTHR45809">
    <property type="entry name" value="VIRAL IAP-ASSOCIATED FACTOR HOMOLOG"/>
    <property type="match status" value="1"/>
</dbReference>
<dbReference type="Pfam" id="PF02114">
    <property type="entry name" value="Phosducin"/>
    <property type="match status" value="1"/>
</dbReference>
<dbReference type="SUPFAM" id="SSF52833">
    <property type="entry name" value="Thioredoxin-like"/>
    <property type="match status" value="1"/>
</dbReference>
<sequence length="239" mass="27614">MQDPNADTEWNDILRKKGILPPKESLKELEEEAEEEQRILQQSVVKTYEDMTLEELEDHEDEFNEEDERAIEMYRRRRLAEWKATKLKNKFGEVLEISGKDYVQEVTKAGEGLWVILHLYKQGIPLCALINQHLSGLARKFPDVKFIKAISTTCIPNYPDRNLPTIFVYLEGDIKAQFIGPLVFGGMNLTRDELEWKLSESGAIMTDLEENPKKPIEDVLLSSVRRSVLMKRDSDSEGD</sequence>
<proteinExistence type="evidence at protein level"/>
<evidence type="ECO:0000250" key="1"/>
<evidence type="ECO:0000250" key="2">
    <source>
        <dbReference type="UniProtKB" id="Q4KLJ8"/>
    </source>
</evidence>
<evidence type="ECO:0000255" key="3"/>
<evidence type="ECO:0000269" key="4">
    <source>
    </source>
</evidence>
<evidence type="ECO:0000269" key="5">
    <source>
    </source>
</evidence>
<evidence type="ECO:0000269" key="6">
    <source>
    </source>
</evidence>
<evidence type="ECO:0000269" key="7">
    <source>
    </source>
</evidence>
<evidence type="ECO:0000269" key="8">
    <source>
    </source>
</evidence>
<evidence type="ECO:0000303" key="9">
    <source>
    </source>
</evidence>
<evidence type="ECO:0000305" key="10"/>
<evidence type="ECO:0007744" key="11">
    <source>
    </source>
</evidence>
<evidence type="ECO:0007744" key="12">
    <source>
    </source>
</evidence>
<evidence type="ECO:0007744" key="13">
    <source>
    </source>
</evidence>
<evidence type="ECO:0007744" key="14">
    <source>
    </source>
</evidence>
<evidence type="ECO:0007829" key="15">
    <source>
        <dbReference type="PDB" id="7NVM"/>
    </source>
</evidence>
<evidence type="ECO:0007829" key="16">
    <source>
        <dbReference type="PDB" id="8I1U"/>
    </source>
</evidence>
<evidence type="ECO:0007829" key="17">
    <source>
        <dbReference type="PDB" id="8I9U"/>
    </source>
</evidence>
<reference key="1">
    <citation type="journal article" date="2004" name="J. Biol. Chem.">
        <title>VIAF, a conserved inhibitor of apoptosis (IAP)-interacting factor that modulates caspase activation.</title>
        <authorList>
            <person name="Wilkinson J.C."/>
            <person name="Richter B.W.M."/>
            <person name="Wilkinson A.S."/>
            <person name="Burstein E."/>
            <person name="Rumble J.M."/>
            <person name="Balliu B."/>
            <person name="Duckett C.S."/>
        </authorList>
    </citation>
    <scope>NUCLEOTIDE SEQUENCE [MRNA]</scope>
    <scope>SUBCELLULAR LOCATION</scope>
    <scope>TISSUE SPECIFICITY</scope>
    <scope>PHOSPHORYLATION</scope>
    <source>
        <tissue>B-cell</tissue>
    </source>
</reference>
<reference key="2">
    <citation type="submission" date="2000-05" db="EMBL/GenBank/DDBJ databases">
        <authorList>
            <person name="Xu X."/>
            <person name="Yang Y."/>
            <person name="Gao G."/>
            <person name="Xiao H."/>
            <person name="Chen Z."/>
            <person name="Han Z."/>
        </authorList>
    </citation>
    <scope>NUCLEOTIDE SEQUENCE [MRNA]</scope>
    <source>
        <tissue>Dendritic cell</tissue>
    </source>
</reference>
<reference key="3">
    <citation type="journal article" date="2004" name="Nat. Genet.">
        <title>Complete sequencing and characterization of 21,243 full-length human cDNAs.</title>
        <authorList>
            <person name="Ota T."/>
            <person name="Suzuki Y."/>
            <person name="Nishikawa T."/>
            <person name="Otsuki T."/>
            <person name="Sugiyama T."/>
            <person name="Irie R."/>
            <person name="Wakamatsu A."/>
            <person name="Hayashi K."/>
            <person name="Sato H."/>
            <person name="Nagai K."/>
            <person name="Kimura K."/>
            <person name="Makita H."/>
            <person name="Sekine M."/>
            <person name="Obayashi M."/>
            <person name="Nishi T."/>
            <person name="Shibahara T."/>
            <person name="Tanaka T."/>
            <person name="Ishii S."/>
            <person name="Yamamoto J."/>
            <person name="Saito K."/>
            <person name="Kawai Y."/>
            <person name="Isono Y."/>
            <person name="Nakamura Y."/>
            <person name="Nagahari K."/>
            <person name="Murakami K."/>
            <person name="Yasuda T."/>
            <person name="Iwayanagi T."/>
            <person name="Wagatsuma M."/>
            <person name="Shiratori A."/>
            <person name="Sudo H."/>
            <person name="Hosoiri T."/>
            <person name="Kaku Y."/>
            <person name="Kodaira H."/>
            <person name="Kondo H."/>
            <person name="Sugawara M."/>
            <person name="Takahashi M."/>
            <person name="Kanda K."/>
            <person name="Yokoi T."/>
            <person name="Furuya T."/>
            <person name="Kikkawa E."/>
            <person name="Omura Y."/>
            <person name="Abe K."/>
            <person name="Kamihara K."/>
            <person name="Katsuta N."/>
            <person name="Sato K."/>
            <person name="Tanikawa M."/>
            <person name="Yamazaki M."/>
            <person name="Ninomiya K."/>
            <person name="Ishibashi T."/>
            <person name="Yamashita H."/>
            <person name="Murakawa K."/>
            <person name="Fujimori K."/>
            <person name="Tanai H."/>
            <person name="Kimata M."/>
            <person name="Watanabe M."/>
            <person name="Hiraoka S."/>
            <person name="Chiba Y."/>
            <person name="Ishida S."/>
            <person name="Ono Y."/>
            <person name="Takiguchi S."/>
            <person name="Watanabe S."/>
            <person name="Yosida M."/>
            <person name="Hotuta T."/>
            <person name="Kusano J."/>
            <person name="Kanehori K."/>
            <person name="Takahashi-Fujii A."/>
            <person name="Hara H."/>
            <person name="Tanase T.-O."/>
            <person name="Nomura Y."/>
            <person name="Togiya S."/>
            <person name="Komai F."/>
            <person name="Hara R."/>
            <person name="Takeuchi K."/>
            <person name="Arita M."/>
            <person name="Imose N."/>
            <person name="Musashino K."/>
            <person name="Yuuki H."/>
            <person name="Oshima A."/>
            <person name="Sasaki N."/>
            <person name="Aotsuka S."/>
            <person name="Yoshikawa Y."/>
            <person name="Matsunawa H."/>
            <person name="Ichihara T."/>
            <person name="Shiohata N."/>
            <person name="Sano S."/>
            <person name="Moriya S."/>
            <person name="Momiyama H."/>
            <person name="Satoh N."/>
            <person name="Takami S."/>
            <person name="Terashima Y."/>
            <person name="Suzuki O."/>
            <person name="Nakagawa S."/>
            <person name="Senoh A."/>
            <person name="Mizoguchi H."/>
            <person name="Goto Y."/>
            <person name="Shimizu F."/>
            <person name="Wakebe H."/>
            <person name="Hishigaki H."/>
            <person name="Watanabe T."/>
            <person name="Sugiyama A."/>
            <person name="Takemoto M."/>
            <person name="Kawakami B."/>
            <person name="Yamazaki M."/>
            <person name="Watanabe K."/>
            <person name="Kumagai A."/>
            <person name="Itakura S."/>
            <person name="Fukuzumi Y."/>
            <person name="Fujimori Y."/>
            <person name="Komiyama M."/>
            <person name="Tashiro H."/>
            <person name="Tanigami A."/>
            <person name="Fujiwara T."/>
            <person name="Ono T."/>
            <person name="Yamada K."/>
            <person name="Fujii Y."/>
            <person name="Ozaki K."/>
            <person name="Hirao M."/>
            <person name="Ohmori Y."/>
            <person name="Kawabata A."/>
            <person name="Hikiji T."/>
            <person name="Kobatake N."/>
            <person name="Inagaki H."/>
            <person name="Ikema Y."/>
            <person name="Okamoto S."/>
            <person name="Okitani R."/>
            <person name="Kawakami T."/>
            <person name="Noguchi S."/>
            <person name="Itoh T."/>
            <person name="Shigeta K."/>
            <person name="Senba T."/>
            <person name="Matsumura K."/>
            <person name="Nakajima Y."/>
            <person name="Mizuno T."/>
            <person name="Morinaga M."/>
            <person name="Sasaki M."/>
            <person name="Togashi T."/>
            <person name="Oyama M."/>
            <person name="Hata H."/>
            <person name="Watanabe M."/>
            <person name="Komatsu T."/>
            <person name="Mizushima-Sugano J."/>
            <person name="Satoh T."/>
            <person name="Shirai Y."/>
            <person name="Takahashi Y."/>
            <person name="Nakagawa K."/>
            <person name="Okumura K."/>
            <person name="Nagase T."/>
            <person name="Nomura N."/>
            <person name="Kikuchi H."/>
            <person name="Masuho Y."/>
            <person name="Yamashita R."/>
            <person name="Nakai K."/>
            <person name="Yada T."/>
            <person name="Nakamura Y."/>
            <person name="Ohara O."/>
            <person name="Isogai T."/>
            <person name="Sugano S."/>
        </authorList>
    </citation>
    <scope>NUCLEOTIDE SEQUENCE [LARGE SCALE MRNA]</scope>
</reference>
<reference key="4">
    <citation type="journal article" date="2005" name="Nature">
        <title>Generation and annotation of the DNA sequences of human chromosomes 2 and 4.</title>
        <authorList>
            <person name="Hillier L.W."/>
            <person name="Graves T.A."/>
            <person name="Fulton R.S."/>
            <person name="Fulton L.A."/>
            <person name="Pepin K.H."/>
            <person name="Minx P."/>
            <person name="Wagner-McPherson C."/>
            <person name="Layman D."/>
            <person name="Wylie K."/>
            <person name="Sekhon M."/>
            <person name="Becker M.C."/>
            <person name="Fewell G.A."/>
            <person name="Delehaunty K.D."/>
            <person name="Miner T.L."/>
            <person name="Nash W.E."/>
            <person name="Kremitzki C."/>
            <person name="Oddy L."/>
            <person name="Du H."/>
            <person name="Sun H."/>
            <person name="Bradshaw-Cordum H."/>
            <person name="Ali J."/>
            <person name="Carter J."/>
            <person name="Cordes M."/>
            <person name="Harris A."/>
            <person name="Isak A."/>
            <person name="van Brunt A."/>
            <person name="Nguyen C."/>
            <person name="Du F."/>
            <person name="Courtney L."/>
            <person name="Kalicki J."/>
            <person name="Ozersky P."/>
            <person name="Abbott S."/>
            <person name="Armstrong J."/>
            <person name="Belter E.A."/>
            <person name="Caruso L."/>
            <person name="Cedroni M."/>
            <person name="Cotton M."/>
            <person name="Davidson T."/>
            <person name="Desai A."/>
            <person name="Elliott G."/>
            <person name="Erb T."/>
            <person name="Fronick C."/>
            <person name="Gaige T."/>
            <person name="Haakenson W."/>
            <person name="Haglund K."/>
            <person name="Holmes A."/>
            <person name="Harkins R."/>
            <person name="Kim K."/>
            <person name="Kruchowski S.S."/>
            <person name="Strong C.M."/>
            <person name="Grewal N."/>
            <person name="Goyea E."/>
            <person name="Hou S."/>
            <person name="Levy A."/>
            <person name="Martinka S."/>
            <person name="Mead K."/>
            <person name="McLellan M.D."/>
            <person name="Meyer R."/>
            <person name="Randall-Maher J."/>
            <person name="Tomlinson C."/>
            <person name="Dauphin-Kohlberg S."/>
            <person name="Kozlowicz-Reilly A."/>
            <person name="Shah N."/>
            <person name="Swearengen-Shahid S."/>
            <person name="Snider J."/>
            <person name="Strong J.T."/>
            <person name="Thompson J."/>
            <person name="Yoakum M."/>
            <person name="Leonard S."/>
            <person name="Pearman C."/>
            <person name="Trani L."/>
            <person name="Radionenko M."/>
            <person name="Waligorski J.E."/>
            <person name="Wang C."/>
            <person name="Rock S.M."/>
            <person name="Tin-Wollam A.-M."/>
            <person name="Maupin R."/>
            <person name="Latreille P."/>
            <person name="Wendl M.C."/>
            <person name="Yang S.-P."/>
            <person name="Pohl C."/>
            <person name="Wallis J.W."/>
            <person name="Spieth J."/>
            <person name="Bieri T.A."/>
            <person name="Berkowicz N."/>
            <person name="Nelson J.O."/>
            <person name="Osborne J."/>
            <person name="Ding L."/>
            <person name="Meyer R."/>
            <person name="Sabo A."/>
            <person name="Shotland Y."/>
            <person name="Sinha P."/>
            <person name="Wohldmann P.E."/>
            <person name="Cook L.L."/>
            <person name="Hickenbotham M.T."/>
            <person name="Eldred J."/>
            <person name="Williams D."/>
            <person name="Jones T.A."/>
            <person name="She X."/>
            <person name="Ciccarelli F.D."/>
            <person name="Izaurralde E."/>
            <person name="Taylor J."/>
            <person name="Schmutz J."/>
            <person name="Myers R.M."/>
            <person name="Cox D.R."/>
            <person name="Huang X."/>
            <person name="McPherson J.D."/>
            <person name="Mardis E.R."/>
            <person name="Clifton S.W."/>
            <person name="Warren W.C."/>
            <person name="Chinwalla A.T."/>
            <person name="Eddy S.R."/>
            <person name="Marra M.A."/>
            <person name="Ovcharenko I."/>
            <person name="Furey T.S."/>
            <person name="Miller W."/>
            <person name="Eichler E.E."/>
            <person name="Bork P."/>
            <person name="Suyama M."/>
            <person name="Torrents D."/>
            <person name="Waterston R.H."/>
            <person name="Wilson R.K."/>
        </authorList>
    </citation>
    <scope>NUCLEOTIDE SEQUENCE [LARGE SCALE GENOMIC DNA]</scope>
</reference>
<reference key="5">
    <citation type="submission" date="2005-09" db="EMBL/GenBank/DDBJ databases">
        <authorList>
            <person name="Mural R.J."/>
            <person name="Istrail S."/>
            <person name="Sutton G.G."/>
            <person name="Florea L."/>
            <person name="Halpern A.L."/>
            <person name="Mobarry C.M."/>
            <person name="Lippert R."/>
            <person name="Walenz B."/>
            <person name="Shatkay H."/>
            <person name="Dew I."/>
            <person name="Miller J.R."/>
            <person name="Flanigan M.J."/>
            <person name="Edwards N.J."/>
            <person name="Bolanos R."/>
            <person name="Fasulo D."/>
            <person name="Halldorsson B.V."/>
            <person name="Hannenhalli S."/>
            <person name="Turner R."/>
            <person name="Yooseph S."/>
            <person name="Lu F."/>
            <person name="Nusskern D.R."/>
            <person name="Shue B.C."/>
            <person name="Zheng X.H."/>
            <person name="Zhong F."/>
            <person name="Delcher A.L."/>
            <person name="Huson D.H."/>
            <person name="Kravitz S.A."/>
            <person name="Mouchard L."/>
            <person name="Reinert K."/>
            <person name="Remington K.A."/>
            <person name="Clark A.G."/>
            <person name="Waterman M.S."/>
            <person name="Eichler E.E."/>
            <person name="Adams M.D."/>
            <person name="Hunkapiller M.W."/>
            <person name="Myers E.W."/>
            <person name="Venter J.C."/>
        </authorList>
    </citation>
    <scope>NUCLEOTIDE SEQUENCE [LARGE SCALE GENOMIC DNA]</scope>
</reference>
<reference key="6">
    <citation type="journal article" date="2004" name="Genome Res.">
        <title>The status, quality, and expansion of the NIH full-length cDNA project: the Mammalian Gene Collection (MGC).</title>
        <authorList>
            <consortium name="The MGC Project Team"/>
        </authorList>
    </citation>
    <scope>NUCLEOTIDE SEQUENCE [LARGE SCALE MRNA]</scope>
    <source>
        <tissue>Eye</tissue>
    </source>
</reference>
<reference key="7">
    <citation type="journal article" date="2007" name="Mol. Biol. Cell">
        <title>Functional interaction between phosducin-like protein 2 and cytosolic chaperonin is essential for cytoskeletal protein function and cell cycle progression.</title>
        <authorList>
            <person name="Stirling P.C."/>
            <person name="Srayko M."/>
            <person name="Takhar K.S."/>
            <person name="Pozniakovsky A."/>
            <person name="Hyman A.A."/>
            <person name="Leroux M.R."/>
        </authorList>
    </citation>
    <scope>FUNCTION</scope>
    <scope>INTERACTION WITH CCT COMPLEX</scope>
</reference>
<reference key="8">
    <citation type="journal article" date="2008" name="Chem. Biol. Drug Des.">
        <title>Binding properties of the C-terminal domain of VIAF.</title>
        <authorList>
            <person name="Bisson W.H."/>
            <person name="Zhang Z."/>
            <person name="Welsh K."/>
            <person name="Huang J.W."/>
            <person name="Ryan J."/>
            <person name="Reed J.C."/>
            <person name="Pellecchia M."/>
        </authorList>
    </citation>
    <scope>INTERACTION WITH XIAP</scope>
</reference>
<reference key="9">
    <citation type="journal article" date="2008" name="Proc. Natl. Acad. Sci. U.S.A.">
        <title>A quantitative atlas of mitotic phosphorylation.</title>
        <authorList>
            <person name="Dephoure N."/>
            <person name="Zhou C."/>
            <person name="Villen J."/>
            <person name="Beausoleil S.A."/>
            <person name="Bakalarski C.E."/>
            <person name="Elledge S.J."/>
            <person name="Gygi S.P."/>
        </authorList>
    </citation>
    <scope>PHOSPHORYLATION [LARGE SCALE ANALYSIS] AT SER-234 AND SER-236</scope>
    <scope>IDENTIFICATION BY MASS SPECTROMETRY [LARGE SCALE ANALYSIS]</scope>
    <source>
        <tissue>Cervix carcinoma</tissue>
    </source>
</reference>
<reference key="10">
    <citation type="journal article" date="2010" name="Sci. Signal.">
        <title>Quantitative phosphoproteomics reveals widespread full phosphorylation site occupancy during mitosis.</title>
        <authorList>
            <person name="Olsen J.V."/>
            <person name="Vermeulen M."/>
            <person name="Santamaria A."/>
            <person name="Kumar C."/>
            <person name="Miller M.L."/>
            <person name="Jensen L.J."/>
            <person name="Gnad F."/>
            <person name="Cox J."/>
            <person name="Jensen T.S."/>
            <person name="Nigg E.A."/>
            <person name="Brunak S."/>
            <person name="Mann M."/>
        </authorList>
    </citation>
    <scope>PHOSPHORYLATION [LARGE SCALE ANALYSIS] AT SER-234 AND SER-236</scope>
    <scope>IDENTIFICATION BY MASS SPECTROMETRY [LARGE SCALE ANALYSIS]</scope>
    <source>
        <tissue>Cervix carcinoma</tissue>
    </source>
</reference>
<reference key="11">
    <citation type="journal article" date="2011" name="BMC Syst. Biol.">
        <title>Initial characterization of the human central proteome.</title>
        <authorList>
            <person name="Burkard T.R."/>
            <person name="Planyavsky M."/>
            <person name="Kaupe I."/>
            <person name="Breitwieser F.P."/>
            <person name="Buerckstuemmer T."/>
            <person name="Bennett K.L."/>
            <person name="Superti-Furga G."/>
            <person name="Colinge J."/>
        </authorList>
    </citation>
    <scope>IDENTIFICATION BY MASS SPECTROMETRY [LARGE SCALE ANALYSIS]</scope>
</reference>
<reference key="12">
    <citation type="journal article" date="2011" name="Sci. Signal.">
        <title>System-wide temporal characterization of the proteome and phosphoproteome of human embryonic stem cell differentiation.</title>
        <authorList>
            <person name="Rigbolt K.T."/>
            <person name="Prokhorova T.A."/>
            <person name="Akimov V."/>
            <person name="Henningsen J."/>
            <person name="Johansen P.T."/>
            <person name="Kratchmarova I."/>
            <person name="Kassem M."/>
            <person name="Mann M."/>
            <person name="Olsen J.V."/>
            <person name="Blagoev B."/>
        </authorList>
    </citation>
    <scope>PHOSPHORYLATION [LARGE SCALE ANALYSIS] AT SER-234 AND SER-236</scope>
    <scope>IDENTIFICATION BY MASS SPECTROMETRY [LARGE SCALE ANALYSIS]</scope>
</reference>
<reference key="13">
    <citation type="journal article" date="2013" name="J. Biol. Chem.">
        <title>Identification of PDCL3 as a novel chaperone protein involved in the generation of functional VEGF receptor 2.</title>
        <authorList>
            <person name="Srinivasan S."/>
            <person name="Meyer R.D."/>
            <person name="Lugo R."/>
            <person name="Rahimi N."/>
        </authorList>
    </citation>
    <scope>FUNCTION</scope>
    <scope>INTERACTION WITH KDR/VEGFR2</scope>
</reference>
<reference key="14">
    <citation type="journal article" date="2013" name="J. Proteome Res.">
        <title>Toward a comprehensive characterization of a human cancer cell phosphoproteome.</title>
        <authorList>
            <person name="Zhou H."/>
            <person name="Di Palma S."/>
            <person name="Preisinger C."/>
            <person name="Peng M."/>
            <person name="Polat A.N."/>
            <person name="Heck A.J."/>
            <person name="Mohammed S."/>
        </authorList>
    </citation>
    <scope>PHOSPHORYLATION [LARGE SCALE ANALYSIS] AT SER-43</scope>
    <scope>IDENTIFICATION BY MASS SPECTROMETRY [LARGE SCALE ANALYSIS]</scope>
    <source>
        <tissue>Erythroleukemia</tissue>
    </source>
</reference>
<reference key="15">
    <citation type="journal article" date="2015" name="Angiogenesis">
        <title>Hypoxia-induced expression of phosducin-like 3 regulates expression of VEGFR-2 and promotes angiogenesis.</title>
        <authorList>
            <person name="Srinivasan S."/>
            <person name="Chitalia V."/>
            <person name="Meyer R.D."/>
            <person name="Hartsough E."/>
            <person name="Mehta M."/>
            <person name="Harrold I."/>
            <person name="Anderson N."/>
            <person name="Feng H."/>
            <person name="Smith L.E."/>
            <person name="Jiang Y."/>
            <person name="Costello C.E."/>
            <person name="Rahimi N."/>
        </authorList>
    </citation>
    <scope>IDENTIFICATION BY MASS SPECTROMETRY</scope>
    <scope>FUNCTION</scope>
    <scope>INTERACTION WITH KDR</scope>
    <scope>SUBCELLULAR LOCATION</scope>
    <scope>TISSUE SPECIFICITY</scope>
    <scope>ACETYLATION AT MET-1</scope>
    <scope>MUTAGENESIS OF MET-1</scope>
</reference>
<protein>
    <recommendedName>
        <fullName>Phosducin-like protein 3</fullName>
    </recommendedName>
    <alternativeName>
        <fullName>HTPHLP</fullName>
    </alternativeName>
    <alternativeName>
        <fullName>PhPL3</fullName>
    </alternativeName>
    <alternativeName>
        <fullName evidence="9">Viral IAP-associated factor 1</fullName>
        <shortName evidence="9">VIAF-1</shortName>
    </alternativeName>
</protein>
<accession>Q9H2J4</accession>
<accession>B2RA00</accession>
<accession>Q53S68</accession>
<organism>
    <name type="scientific">Homo sapiens</name>
    <name type="common">Human</name>
    <dbReference type="NCBI Taxonomy" id="9606"/>
    <lineage>
        <taxon>Eukaryota</taxon>
        <taxon>Metazoa</taxon>
        <taxon>Chordata</taxon>
        <taxon>Craniata</taxon>
        <taxon>Vertebrata</taxon>
        <taxon>Euteleostomi</taxon>
        <taxon>Mammalia</taxon>
        <taxon>Eutheria</taxon>
        <taxon>Euarchontoglires</taxon>
        <taxon>Primates</taxon>
        <taxon>Haplorrhini</taxon>
        <taxon>Catarrhini</taxon>
        <taxon>Hominidae</taxon>
        <taxon>Homo</taxon>
    </lineage>
</organism>
<comment type="function">
    <text evidence="2 4 5 7 8">Acts as a chaperone for the angiogenic VEGF receptor KDR/VEGFR2, increasing its abundance by inhibiting its ubiquitination and degradation (PubMed:23792958, PubMed:26059764). Inhibits the folding activity of the chaperonin-containing T-complex (CCT) which leads to inhibition of cytoskeletal actin folding (PubMed:17429077). Acts as a chaperone during heat shock alongside HSP90 and HSP40/70 chaperone complexes (By similarity). Modulates the activation of caspases during apoptosis (PubMed:15371430).</text>
</comment>
<comment type="subunit">
    <text evidence="2 5 6 7 8">Interacts (via thioredoxin fold region) with KDR/VEGFR2 (via juxtamembrane domain) (PubMed:23792958, PubMed:26059764). Forms ternary complexes with the chaperonin CCT complex and actin substrate, leading to inhibition of actin folding (PubMed:17429077). Interacts with XIAP (via BIR 3 and RING domain) (PubMed:19012568). Interacts with HSP90AA1 and HSP90AB1 (By similarity).</text>
</comment>
<comment type="interaction">
    <interactant intactId="EBI-2555126">
        <id>Q9H2J4</id>
    </interactant>
    <interactant intactId="EBI-54800759">
        <id>Q8TDY3</id>
        <label>ACTRT2</label>
    </interactant>
    <organismsDiffer>false</organismsDiffer>
    <experiments>2</experiments>
</comment>
<comment type="interaction">
    <interactant intactId="EBI-2555126">
        <id>Q9H2J4</id>
    </interactant>
    <interactant intactId="EBI-54800784">
        <id>Q9BYD9</id>
        <label>ACTRT3</label>
    </interactant>
    <organismsDiffer>false</organismsDiffer>
    <experiments>2</experiments>
</comment>
<comment type="subcellular location">
    <subcellularLocation>
        <location evidence="4 8">Cytoplasm</location>
    </subcellularLocation>
    <subcellularLocation>
        <location evidence="8">Cytoplasm</location>
        <location evidence="8">Perinuclear region</location>
    </subcellularLocation>
    <subcellularLocation>
        <location evidence="8">Endoplasmic reticulum</location>
    </subcellularLocation>
</comment>
<comment type="tissue specificity">
    <text evidence="4 8">Expressed in endothelial cells (at protein level) (PubMed:26059764). Expressed in all tissues examined including spleen, thymus, prostate, testis, ovary, small intestine and colon (PubMed:15371430).</text>
</comment>
<comment type="PTM">
    <text evidence="8">N-terminal methionine acetylation destabilizes the protein.</text>
</comment>
<comment type="similarity">
    <text evidence="10">Belongs to the phosducin family.</text>
</comment>
<feature type="chain" id="PRO_0000163758" description="Phosducin-like protein 3">
    <location>
        <begin position="1"/>
        <end position="239"/>
    </location>
</feature>
<feature type="domain" description="Phosducin" evidence="3">
    <location>
        <begin position="32"/>
        <end position="180"/>
    </location>
</feature>
<feature type="region of interest" description="Thioredoxin fold" evidence="1">
    <location>
        <begin position="91"/>
        <end position="239"/>
    </location>
</feature>
<feature type="region of interest" description="Interaction with XIAP" evidence="6">
    <location>
        <begin position="97"/>
        <end position="99"/>
    </location>
</feature>
<feature type="region of interest" description="Interaction with XIAP" evidence="6">
    <location>
        <begin position="153"/>
        <end position="155"/>
    </location>
</feature>
<feature type="modified residue" description="N-acetylmethionine" evidence="8">
    <location>
        <position position="1"/>
    </location>
</feature>
<feature type="modified residue" description="Phosphoserine" evidence="14">
    <location>
        <position position="43"/>
    </location>
</feature>
<feature type="modified residue" description="Phosphoserine" evidence="11 12 13">
    <location>
        <position position="234"/>
    </location>
</feature>
<feature type="modified residue" description="Phosphoserine" evidence="11 12 13">
    <location>
        <position position="236"/>
    </location>
</feature>
<feature type="mutagenesis site" description="Loss of acetylation. Increases protein stability." evidence="8">
    <location>
        <position position="1"/>
    </location>
</feature>
<feature type="helix" evidence="15">
    <location>
        <begin position="9"/>
        <end position="17"/>
    </location>
</feature>
<feature type="helix" evidence="16">
    <location>
        <begin position="31"/>
        <end position="34"/>
    </location>
</feature>
<feature type="turn" evidence="15">
    <location>
        <begin position="48"/>
        <end position="50"/>
    </location>
</feature>
<feature type="helix" evidence="15">
    <location>
        <begin position="53"/>
        <end position="59"/>
    </location>
</feature>
<feature type="strand" evidence="15">
    <location>
        <begin position="60"/>
        <end position="63"/>
    </location>
</feature>
<feature type="helix" evidence="15">
    <location>
        <begin position="65"/>
        <end position="88"/>
    </location>
</feature>
<feature type="helix" evidence="15">
    <location>
        <begin position="99"/>
        <end position="105"/>
    </location>
</feature>
<feature type="turn" evidence="15">
    <location>
        <begin position="106"/>
        <end position="108"/>
    </location>
</feature>
<feature type="strand" evidence="15">
    <location>
        <begin position="114"/>
        <end position="120"/>
    </location>
</feature>
<feature type="helix" evidence="15">
    <location>
        <begin position="125"/>
        <end position="140"/>
    </location>
</feature>
<feature type="strand" evidence="15">
    <location>
        <begin position="144"/>
        <end position="150"/>
    </location>
</feature>
<feature type="helix" evidence="15">
    <location>
        <begin position="151"/>
        <end position="154"/>
    </location>
</feature>
<feature type="strand" evidence="15">
    <location>
        <begin position="160"/>
        <end position="162"/>
    </location>
</feature>
<feature type="strand" evidence="15">
    <location>
        <begin position="165"/>
        <end position="170"/>
    </location>
</feature>
<feature type="strand" evidence="15">
    <location>
        <begin position="173"/>
        <end position="180"/>
    </location>
</feature>
<feature type="turn" evidence="15">
    <location>
        <begin position="181"/>
        <end position="184"/>
    </location>
</feature>
<feature type="strand" evidence="16">
    <location>
        <begin position="186"/>
        <end position="188"/>
    </location>
</feature>
<feature type="strand" evidence="17">
    <location>
        <begin position="190"/>
        <end position="192"/>
    </location>
</feature>
<feature type="helix" evidence="15">
    <location>
        <begin position="193"/>
        <end position="200"/>
    </location>
</feature>
<feature type="helix" evidence="16">
    <location>
        <begin position="208"/>
        <end position="210"/>
    </location>
</feature>
<feature type="helix" evidence="17">
    <location>
        <begin position="219"/>
        <end position="231"/>
    </location>
</feature>